<sequence length="572" mass="61813">MALTISRAQYVATYGPTVGDKVRLGDTNLWATIEQDLLTKGDECKFGGGKSVRDGMAQSGTATRDNPNVLDFVITNVMIIDARLGIIKADIGIRDGRIVGIGQAGNPDTMDNVTPNMIIGASTEVHNGVHLIATAGGIDTHIHFICPQQAQHAIESGVTTLIGGGTGPADGTHATTCTPGAWYMEHMFQAAEALPVNVGFFGKGNCSTLDPLREQIEAGALGLKIHEDWGATPAVIDSALKVADEMDIQVAIHTDTLNESGFLEDTMKAIDGRVIHTFHTEGAGGGHAPDIIKAAMYSNVLPASTNPTRPFTKNTIDEHLDMLMVCHHLDKRVPEDVAFADSRIRPETIAAEDILHDMGVFSIMSSDSQAMGRIGEVVIRTWQTADKMKMQRGELGNEGNDNFRIKRYIAKYTINPAIAHGIAEHIGSLEVGKIADIVLWKPMFFGVKPEVVIKKGFISYAKMGDPNASIPTPQPVFYRPMYGAQGLATAQTAVFFVSQAAEKADIRAKFGLHKETIAVKGCRNVGKKDLVHNDVTPNITVDAERYEVRVDGELITCEPVDSVPLGQRYFLF</sequence>
<comment type="catalytic activity">
    <reaction evidence="1">
        <text>urea + 2 H2O + H(+) = hydrogencarbonate + 2 NH4(+)</text>
        <dbReference type="Rhea" id="RHEA:20557"/>
        <dbReference type="ChEBI" id="CHEBI:15377"/>
        <dbReference type="ChEBI" id="CHEBI:15378"/>
        <dbReference type="ChEBI" id="CHEBI:16199"/>
        <dbReference type="ChEBI" id="CHEBI:17544"/>
        <dbReference type="ChEBI" id="CHEBI:28938"/>
        <dbReference type="EC" id="3.5.1.5"/>
    </reaction>
</comment>
<comment type="cofactor">
    <cofactor evidence="1">
        <name>Ni cation</name>
        <dbReference type="ChEBI" id="CHEBI:25516"/>
    </cofactor>
    <text evidence="1">Binds 2 nickel ions per subunit.</text>
</comment>
<comment type="pathway">
    <text evidence="1">Nitrogen metabolism; urea degradation; CO(2) and NH(3) from urea (urease route): step 1/1.</text>
</comment>
<comment type="subunit">
    <text evidence="1">Heterotrimer of UreA (gamma), UreB (beta) and UreC (alpha) subunits. Three heterotrimers associate to form the active enzyme.</text>
</comment>
<comment type="subcellular location">
    <subcellularLocation>
        <location evidence="1">Cytoplasm</location>
    </subcellularLocation>
</comment>
<comment type="PTM">
    <text evidence="1">Carboxylation allows a single lysine to coordinate two nickel ions.</text>
</comment>
<comment type="similarity">
    <text evidence="1">Belongs to the metallo-dependent hydrolases superfamily. Urease alpha subunit family.</text>
</comment>
<protein>
    <recommendedName>
        <fullName evidence="1">Urease subunit alpha</fullName>
        <ecNumber evidence="1">3.5.1.5</ecNumber>
    </recommendedName>
    <alternativeName>
        <fullName evidence="1">Urea amidohydrolase subunit alpha</fullName>
    </alternativeName>
</protein>
<name>URE1_HAEIG</name>
<accession>A5UH45</accession>
<proteinExistence type="inferred from homology"/>
<reference key="1">
    <citation type="journal article" date="2007" name="Genome Biol.">
        <title>Characterization and modeling of the Haemophilus influenzae core and supragenomes based on the complete genomic sequences of Rd and 12 clinical nontypeable strains.</title>
        <authorList>
            <person name="Hogg J.S."/>
            <person name="Hu F.Z."/>
            <person name="Janto B."/>
            <person name="Boissy R."/>
            <person name="Hayes J."/>
            <person name="Keefe R."/>
            <person name="Post J.C."/>
            <person name="Ehrlich G.D."/>
        </authorList>
    </citation>
    <scope>NUCLEOTIDE SEQUENCE [LARGE SCALE GENOMIC DNA]</scope>
    <source>
        <strain>PittGG</strain>
    </source>
</reference>
<evidence type="ECO:0000255" key="1">
    <source>
        <dbReference type="HAMAP-Rule" id="MF_01953"/>
    </source>
</evidence>
<organism>
    <name type="scientific">Haemophilus influenzae (strain PittGG)</name>
    <dbReference type="NCBI Taxonomy" id="374931"/>
    <lineage>
        <taxon>Bacteria</taxon>
        <taxon>Pseudomonadati</taxon>
        <taxon>Pseudomonadota</taxon>
        <taxon>Gammaproteobacteria</taxon>
        <taxon>Pasteurellales</taxon>
        <taxon>Pasteurellaceae</taxon>
        <taxon>Haemophilus</taxon>
    </lineage>
</organism>
<gene>
    <name evidence="1" type="primary">ureC</name>
    <name type="ordered locus">CGSHiGG_05950</name>
</gene>
<keyword id="KW-0963">Cytoplasm</keyword>
<keyword id="KW-0378">Hydrolase</keyword>
<keyword id="KW-0479">Metal-binding</keyword>
<keyword id="KW-0533">Nickel</keyword>
<dbReference type="EC" id="3.5.1.5" evidence="1"/>
<dbReference type="EMBL" id="CP000672">
    <property type="protein sequence ID" value="ABR00101.1"/>
    <property type="molecule type" value="Genomic_DNA"/>
</dbReference>
<dbReference type="SMR" id="A5UH45"/>
<dbReference type="MEROPS" id="M38.982"/>
<dbReference type="KEGG" id="hiq:CGSHiGG_05950"/>
<dbReference type="HOGENOM" id="CLU_000980_0_0_6"/>
<dbReference type="UniPathway" id="UPA00258">
    <property type="reaction ID" value="UER00370"/>
</dbReference>
<dbReference type="Proteomes" id="UP000001990">
    <property type="component" value="Chromosome"/>
</dbReference>
<dbReference type="GO" id="GO:0005737">
    <property type="term" value="C:cytoplasm"/>
    <property type="evidence" value="ECO:0007669"/>
    <property type="project" value="UniProtKB-SubCell"/>
</dbReference>
<dbReference type="GO" id="GO:0016151">
    <property type="term" value="F:nickel cation binding"/>
    <property type="evidence" value="ECO:0007669"/>
    <property type="project" value="UniProtKB-UniRule"/>
</dbReference>
<dbReference type="GO" id="GO:0009039">
    <property type="term" value="F:urease activity"/>
    <property type="evidence" value="ECO:0007669"/>
    <property type="project" value="UniProtKB-UniRule"/>
</dbReference>
<dbReference type="GO" id="GO:0043419">
    <property type="term" value="P:urea catabolic process"/>
    <property type="evidence" value="ECO:0007669"/>
    <property type="project" value="UniProtKB-UniRule"/>
</dbReference>
<dbReference type="CDD" id="cd00375">
    <property type="entry name" value="Urease_alpha"/>
    <property type="match status" value="1"/>
</dbReference>
<dbReference type="Gene3D" id="3.20.20.140">
    <property type="entry name" value="Metal-dependent hydrolases"/>
    <property type="match status" value="1"/>
</dbReference>
<dbReference type="Gene3D" id="2.30.40.10">
    <property type="entry name" value="Urease, subunit C, domain 1"/>
    <property type="match status" value="1"/>
</dbReference>
<dbReference type="HAMAP" id="MF_01953">
    <property type="entry name" value="Urease_alpha"/>
    <property type="match status" value="1"/>
</dbReference>
<dbReference type="InterPro" id="IPR006680">
    <property type="entry name" value="Amidohydro-rel"/>
</dbReference>
<dbReference type="InterPro" id="IPR011059">
    <property type="entry name" value="Metal-dep_hydrolase_composite"/>
</dbReference>
<dbReference type="InterPro" id="IPR032466">
    <property type="entry name" value="Metal_Hydrolase"/>
</dbReference>
<dbReference type="InterPro" id="IPR011612">
    <property type="entry name" value="Urease_alpha_N_dom"/>
</dbReference>
<dbReference type="InterPro" id="IPR050112">
    <property type="entry name" value="Urease_alpha_subunit"/>
</dbReference>
<dbReference type="InterPro" id="IPR017950">
    <property type="entry name" value="Urease_AS"/>
</dbReference>
<dbReference type="InterPro" id="IPR005848">
    <property type="entry name" value="Urease_asu"/>
</dbReference>
<dbReference type="InterPro" id="IPR017951">
    <property type="entry name" value="Urease_asu_c"/>
</dbReference>
<dbReference type="InterPro" id="IPR029754">
    <property type="entry name" value="Urease_Ni-bd"/>
</dbReference>
<dbReference type="NCBIfam" id="NF009686">
    <property type="entry name" value="PRK13207.1"/>
    <property type="match status" value="1"/>
</dbReference>
<dbReference type="NCBIfam" id="TIGR01792">
    <property type="entry name" value="urease_alph"/>
    <property type="match status" value="1"/>
</dbReference>
<dbReference type="PANTHER" id="PTHR43440">
    <property type="entry name" value="UREASE"/>
    <property type="match status" value="1"/>
</dbReference>
<dbReference type="PANTHER" id="PTHR43440:SF1">
    <property type="entry name" value="UREASE"/>
    <property type="match status" value="1"/>
</dbReference>
<dbReference type="Pfam" id="PF01979">
    <property type="entry name" value="Amidohydro_1"/>
    <property type="match status" value="1"/>
</dbReference>
<dbReference type="Pfam" id="PF00449">
    <property type="entry name" value="Urease_alpha"/>
    <property type="match status" value="1"/>
</dbReference>
<dbReference type="PRINTS" id="PR01752">
    <property type="entry name" value="UREASE"/>
</dbReference>
<dbReference type="SUPFAM" id="SSF51338">
    <property type="entry name" value="Composite domain of metallo-dependent hydrolases"/>
    <property type="match status" value="2"/>
</dbReference>
<dbReference type="SUPFAM" id="SSF51556">
    <property type="entry name" value="Metallo-dependent hydrolases"/>
    <property type="match status" value="1"/>
</dbReference>
<dbReference type="PROSITE" id="PS01120">
    <property type="entry name" value="UREASE_1"/>
    <property type="match status" value="1"/>
</dbReference>
<dbReference type="PROSITE" id="PS00145">
    <property type="entry name" value="UREASE_2"/>
    <property type="match status" value="1"/>
</dbReference>
<dbReference type="PROSITE" id="PS51368">
    <property type="entry name" value="UREASE_3"/>
    <property type="match status" value="1"/>
</dbReference>
<feature type="chain" id="PRO_1000070659" description="Urease subunit alpha">
    <location>
        <begin position="1"/>
        <end position="572"/>
    </location>
</feature>
<feature type="domain" description="Urease" evidence="1">
    <location>
        <begin position="136"/>
        <end position="572"/>
    </location>
</feature>
<feature type="active site" description="Proton donor" evidence="1">
    <location>
        <position position="327"/>
    </location>
</feature>
<feature type="binding site" evidence="1">
    <location>
        <position position="141"/>
    </location>
    <ligand>
        <name>Ni(2+)</name>
        <dbReference type="ChEBI" id="CHEBI:49786"/>
        <label>1</label>
    </ligand>
</feature>
<feature type="binding site" evidence="1">
    <location>
        <position position="143"/>
    </location>
    <ligand>
        <name>Ni(2+)</name>
        <dbReference type="ChEBI" id="CHEBI:49786"/>
        <label>1</label>
    </ligand>
</feature>
<feature type="binding site" description="via carbamate group" evidence="1">
    <location>
        <position position="224"/>
    </location>
    <ligand>
        <name>Ni(2+)</name>
        <dbReference type="ChEBI" id="CHEBI:49786"/>
        <label>1</label>
    </ligand>
</feature>
<feature type="binding site" description="via carbamate group" evidence="1">
    <location>
        <position position="224"/>
    </location>
    <ligand>
        <name>Ni(2+)</name>
        <dbReference type="ChEBI" id="CHEBI:49786"/>
        <label>2</label>
    </ligand>
</feature>
<feature type="binding site" evidence="1">
    <location>
        <position position="226"/>
    </location>
    <ligand>
        <name>substrate</name>
    </ligand>
</feature>
<feature type="binding site" evidence="1">
    <location>
        <position position="253"/>
    </location>
    <ligand>
        <name>Ni(2+)</name>
        <dbReference type="ChEBI" id="CHEBI:49786"/>
        <label>2</label>
    </ligand>
</feature>
<feature type="binding site" evidence="1">
    <location>
        <position position="279"/>
    </location>
    <ligand>
        <name>Ni(2+)</name>
        <dbReference type="ChEBI" id="CHEBI:49786"/>
        <label>2</label>
    </ligand>
</feature>
<feature type="binding site" evidence="1">
    <location>
        <position position="367"/>
    </location>
    <ligand>
        <name>Ni(2+)</name>
        <dbReference type="ChEBI" id="CHEBI:49786"/>
        <label>1</label>
    </ligand>
</feature>
<feature type="modified residue" description="N6-carboxylysine" evidence="1">
    <location>
        <position position="224"/>
    </location>
</feature>